<accession>Q4UYH8</accession>
<feature type="chain" id="PRO_1000067471" description="C4-dicarboxylate transport protein">
    <location>
        <begin position="1"/>
        <end position="448"/>
    </location>
</feature>
<feature type="transmembrane region" description="Helical" evidence="1">
    <location>
        <begin position="22"/>
        <end position="42"/>
    </location>
</feature>
<feature type="transmembrane region" description="Helical" evidence="1">
    <location>
        <begin position="55"/>
        <end position="75"/>
    </location>
</feature>
<feature type="transmembrane region" description="Helical" evidence="1">
    <location>
        <begin position="90"/>
        <end position="110"/>
    </location>
</feature>
<feature type="transmembrane region" description="Helical" evidence="1">
    <location>
        <begin position="137"/>
        <end position="157"/>
    </location>
</feature>
<feature type="transmembrane region" description="Helical" evidence="1">
    <location>
        <begin position="159"/>
        <end position="179"/>
    </location>
</feature>
<feature type="transmembrane region" description="Helical" evidence="1">
    <location>
        <begin position="199"/>
        <end position="219"/>
    </location>
</feature>
<feature type="transmembrane region" description="Helical" evidence="1">
    <location>
        <begin position="232"/>
        <end position="252"/>
    </location>
</feature>
<feature type="region of interest" description="Disordered" evidence="2">
    <location>
        <begin position="428"/>
        <end position="448"/>
    </location>
</feature>
<feature type="compositionally biased region" description="Pro residues" evidence="2">
    <location>
        <begin position="432"/>
        <end position="441"/>
    </location>
</feature>
<dbReference type="EMBL" id="CP000050">
    <property type="protein sequence ID" value="AAY47895.1"/>
    <property type="molecule type" value="Genomic_DNA"/>
</dbReference>
<dbReference type="RefSeq" id="WP_011038444.1">
    <property type="nucleotide sequence ID" value="NZ_CP155948.1"/>
</dbReference>
<dbReference type="SMR" id="Q4UYH8"/>
<dbReference type="KEGG" id="xcb:XC_0820"/>
<dbReference type="HOGENOM" id="CLU_019375_7_0_6"/>
<dbReference type="Proteomes" id="UP000000420">
    <property type="component" value="Chromosome"/>
</dbReference>
<dbReference type="GO" id="GO:0005886">
    <property type="term" value="C:plasma membrane"/>
    <property type="evidence" value="ECO:0007669"/>
    <property type="project" value="UniProtKB-SubCell"/>
</dbReference>
<dbReference type="GO" id="GO:0015138">
    <property type="term" value="F:fumarate transmembrane transporter activity"/>
    <property type="evidence" value="ECO:0007669"/>
    <property type="project" value="TreeGrafter"/>
</dbReference>
<dbReference type="GO" id="GO:0015366">
    <property type="term" value="F:malate:proton symporter activity"/>
    <property type="evidence" value="ECO:0007669"/>
    <property type="project" value="TreeGrafter"/>
</dbReference>
<dbReference type="GO" id="GO:0015141">
    <property type="term" value="F:succinate transmembrane transporter activity"/>
    <property type="evidence" value="ECO:0007669"/>
    <property type="project" value="TreeGrafter"/>
</dbReference>
<dbReference type="GO" id="GO:0070778">
    <property type="term" value="P:L-aspartate transmembrane transport"/>
    <property type="evidence" value="ECO:0007669"/>
    <property type="project" value="TreeGrafter"/>
</dbReference>
<dbReference type="FunFam" id="1.10.3860.10:FF:000001">
    <property type="entry name" value="C4-dicarboxylate transport protein"/>
    <property type="match status" value="1"/>
</dbReference>
<dbReference type="Gene3D" id="1.10.3860.10">
    <property type="entry name" value="Sodium:dicarboxylate symporter"/>
    <property type="match status" value="1"/>
</dbReference>
<dbReference type="HAMAP" id="MF_01300">
    <property type="entry name" value="C4_dicarb_transport"/>
    <property type="match status" value="1"/>
</dbReference>
<dbReference type="InterPro" id="IPR023954">
    <property type="entry name" value="C4_dicarb_transport"/>
</dbReference>
<dbReference type="InterPro" id="IPR001991">
    <property type="entry name" value="Na-dicarboxylate_symporter"/>
</dbReference>
<dbReference type="InterPro" id="IPR018107">
    <property type="entry name" value="Na-dicarboxylate_symporter_CS"/>
</dbReference>
<dbReference type="InterPro" id="IPR036458">
    <property type="entry name" value="Na:dicarbo_symporter_sf"/>
</dbReference>
<dbReference type="NCBIfam" id="NF002461">
    <property type="entry name" value="PRK01663.1"/>
    <property type="match status" value="1"/>
</dbReference>
<dbReference type="NCBIfam" id="NF009587">
    <property type="entry name" value="PRK13027.1"/>
    <property type="match status" value="1"/>
</dbReference>
<dbReference type="PANTHER" id="PTHR42865:SF1">
    <property type="entry name" value="AEROBIC C4-DICARBOXYLATE TRANSPORT PROTEIN"/>
    <property type="match status" value="1"/>
</dbReference>
<dbReference type="PANTHER" id="PTHR42865">
    <property type="entry name" value="PROTON/GLUTAMATE-ASPARTATE SYMPORTER"/>
    <property type="match status" value="1"/>
</dbReference>
<dbReference type="Pfam" id="PF00375">
    <property type="entry name" value="SDF"/>
    <property type="match status" value="1"/>
</dbReference>
<dbReference type="PRINTS" id="PR00173">
    <property type="entry name" value="EDTRNSPORT"/>
</dbReference>
<dbReference type="SUPFAM" id="SSF118215">
    <property type="entry name" value="Proton glutamate symport protein"/>
    <property type="match status" value="1"/>
</dbReference>
<dbReference type="PROSITE" id="PS00713">
    <property type="entry name" value="NA_DICARBOXYL_SYMP_1"/>
    <property type="match status" value="1"/>
</dbReference>
<dbReference type="PROSITE" id="PS00714">
    <property type="entry name" value="NA_DICARBOXYL_SYMP_2"/>
    <property type="match status" value="1"/>
</dbReference>
<keyword id="KW-0997">Cell inner membrane</keyword>
<keyword id="KW-1003">Cell membrane</keyword>
<keyword id="KW-0472">Membrane</keyword>
<keyword id="KW-0769">Symport</keyword>
<keyword id="KW-0812">Transmembrane</keyword>
<keyword id="KW-1133">Transmembrane helix</keyword>
<keyword id="KW-0813">Transport</keyword>
<reference key="1">
    <citation type="journal article" date="2005" name="Genome Res.">
        <title>Comparative and functional genomic analyses of the pathogenicity of phytopathogen Xanthomonas campestris pv. campestris.</title>
        <authorList>
            <person name="Qian W."/>
            <person name="Jia Y."/>
            <person name="Ren S.-X."/>
            <person name="He Y.-Q."/>
            <person name="Feng J.-X."/>
            <person name="Lu L.-F."/>
            <person name="Sun Q."/>
            <person name="Ying G."/>
            <person name="Tang D.-J."/>
            <person name="Tang H."/>
            <person name="Wu W."/>
            <person name="Hao P."/>
            <person name="Wang L."/>
            <person name="Jiang B.-L."/>
            <person name="Zeng S."/>
            <person name="Gu W.-Y."/>
            <person name="Lu G."/>
            <person name="Rong L."/>
            <person name="Tian Y."/>
            <person name="Yao Z."/>
            <person name="Fu G."/>
            <person name="Chen B."/>
            <person name="Fang R."/>
            <person name="Qiang B."/>
            <person name="Chen Z."/>
            <person name="Zhao G.-P."/>
            <person name="Tang J.-L."/>
            <person name="He C."/>
        </authorList>
    </citation>
    <scope>NUCLEOTIDE SEQUENCE [LARGE SCALE GENOMIC DNA]</scope>
    <source>
        <strain>8004</strain>
    </source>
</reference>
<sequence length="448" mass="47406">MHISKPAGPLPAPVPFYRQLYFQVVVAIVLGALLGHFEPAFAESLKPLGDAFIKLVKMIIAPVIFLTIVTGIAGMTHLKTVGRVFAKSMTYFLFFSTLALIVGMVVAHVVQPGAGMNINPAELDQSAVNTYVQKSHELSLVGFLMDIIPATLISAFVDGNILQVLFVAVLFGIALALVGERGRPVLSFLEALTAPVFRLVHMLMKAAPIGAFGAIAFTIGKYGVESLVNLAWLVGSFYLTSLFFVLVILGIVCRLCGFSVLKLIRYLKAELLLVLGTSSSESALPSLMEKMEKAGCEKSVVGLVVPTGYSFNLDGTNIYMTLAALFIAQATNVDLTLGQQITLLAVAMLSSKGAAGVTGAGFITLAATLSVVPDVPVAGMALILGVDRFMSECRSLTNFIGNAVATVVVSRWENALDRDQLSLALDGRAPPLQAPVPPPDAVAPVSAR</sequence>
<protein>
    <recommendedName>
        <fullName evidence="1">C4-dicarboxylate transport protein</fullName>
    </recommendedName>
</protein>
<organism>
    <name type="scientific">Xanthomonas campestris pv. campestris (strain 8004)</name>
    <dbReference type="NCBI Taxonomy" id="314565"/>
    <lineage>
        <taxon>Bacteria</taxon>
        <taxon>Pseudomonadati</taxon>
        <taxon>Pseudomonadota</taxon>
        <taxon>Gammaproteobacteria</taxon>
        <taxon>Lysobacterales</taxon>
        <taxon>Lysobacteraceae</taxon>
        <taxon>Xanthomonas</taxon>
    </lineage>
</organism>
<evidence type="ECO:0000255" key="1">
    <source>
        <dbReference type="HAMAP-Rule" id="MF_01300"/>
    </source>
</evidence>
<evidence type="ECO:0000256" key="2">
    <source>
        <dbReference type="SAM" id="MobiDB-lite"/>
    </source>
</evidence>
<gene>
    <name evidence="1" type="primary">dctA</name>
    <name type="ordered locus">XC_0820</name>
</gene>
<proteinExistence type="inferred from homology"/>
<comment type="function">
    <text evidence="1">Responsible for the transport of dicarboxylates such as succinate, fumarate, and malate from the periplasm across the membrane.</text>
</comment>
<comment type="subcellular location">
    <subcellularLocation>
        <location evidence="1">Cell inner membrane</location>
        <topology evidence="1">Multi-pass membrane protein</topology>
    </subcellularLocation>
</comment>
<comment type="similarity">
    <text evidence="1">Belongs to the dicarboxylate/amino acid:cation symporter (DAACS) (TC 2.A.23) family.</text>
</comment>
<name>DCTA_XANC8</name>